<proteinExistence type="evidence at transcript level"/>
<sequence length="4363" mass="479692">MELNDDPTGKIISGVNDISLPSLSAKQVAQSLSEQLSTSALPAIQSFSFPPLPNGLSETFHDKKMDLSYAFPRKLMSALEVSSMFCAAWAIAVDRYTTNDDVVFGAFLQDIPNPGLVPLRLKTRSETDVGGLLHYVISEITQSCNYPYLGKEKSSELSTERQDSHEVGAMLVFGKSGAGESNVLYEKPITCALTITCTLAGDQLHIGASYDSRVIEAPMLTRVLRQFGYLATQLADANPTRRLTDIAQELNRQDLEDIWKTNMEITTESGALIQEIFAGQAKQRPHAIAVEAWDGVLSYGQLESLSTGLAHALLQLGIKDHSLIPFCLKNSKWAVVAMLGILKANCTFVPIDSSSPWDRRNRILELTHAEVIITSSFMSDDNLWNTSVLCLTEETVSGFPVLSNLPGRISGPGSAAYVLFTSGSTGDPKGVVVAHSAICNSLHAIGSKIGLDETSRTLQFTSLAFDISIFEILGTLIFGGTICVPSEDDRLTRLPEYIVSAQVNTASLTPSVARLYDAAMVPCLNTLILGGEAMTRADIKNWCRLPNLFNGFGPTETAIGCAMHRVHAEQKQHSLIGRLAGIPVWVVDPSDHEVLVPFGAVGELVVEGTTLALGYLDDDIKTQAAFIQDPPWLLRGCGVELPGRRGRIYKTGDLVQYNEEGSLLYVGRKDSDTQVKIRGNRVDLGEIESHLHECLPSRSEVVVDVVLPSDAPTSSDHILAVFLRYEGVNTLQDSTERTIPTKLIQVPEGIQKHLYSKLPAYMVPTVYFSVAVIPKMISGKTDRKRLRGMASLFSMQELAANSSHQTVKRAPDSVIARQLQGIWAQVLHVDPLAIGMDDSFFALGGDSIAAIRLVREARQTFSIGLTVADIFSFPSLGALAAIAKVIPLIDPGPSPAFTSLRGVSSITDLLKDVAESCGLKQPSLIEDVYACTPLQEGLLALSSKHSGTYTVQRVLELAPDVDIARFQAAWETTARCTPIMRTRIVQHVELGLLQAVVDEDIEWKTLPSEQLDSFLLADQKTSMALGQPLMRYALTQGPYSGTHGSRHLVWTVHHALYDGWSLPLLLERVRQAYYGEQPQLSEFAPFIRWCEQDVDEDSAARHWQTYLEEADESALFPPLPPSITEPIEDQQAENRWALPEHGTTAVTRSIVLRAAWAIVASRYTSSNDVLFGTTVSGRGAPVPGIEEMVGPTVATVPTRCKIDDNKSASSFLLEVQQAAVEAIPFEQTGLKRISEIDTRLRRVREIQTFLVVQPAEYGEAAFEGLGKWVNGPGYYRLDVSALTLECVLTESGVRCVAYFDSHVIQAATVTRALAQFAHVSQQLCTASPNTTLGQIDVLTSSDLRDIWNWNGPLLQLAEEPLPHVDIGKQARTRPGAIAVHSWDAQLTYQELDKYSSLLAKQLLDADVKGGDIVPLYFEPSAWVVVAMLAVLKSGAAFTPIDTSQPEQRRNRIVSQLQPSIGLVSARHATTVFGPGWATLEVSRRALSSMPEGPLGQVDASSIAWVIFTSGSTGLPKGAMLQHSAVHTSHRALGATFGLCANTRMLQFSSFAFDACVLEIVATLMHGGCVCIPSELQQRSLSELPSVCAAMEVNTMVLTPTVARLFGPSDFPDLTTLVLTGEPLVQSDVTKWSSIAYVANGYGPAECSNICTVHRIAPDDTDPNRIGSLRGVPNWVVHSRNHHQLTPIGGVGELLIEGATVGHGYLNDAEKTAAAFVTDPAWLTEISHALPCFERHGRLYKTGDIVKLHEDGSLSYLGRKDTQIKIHGQRIELGEIEHHVLHCTKAVEVTVDAVYVPGEEKNKSLVAFVRPSNGTSTPQFYDNPDAIINELANSLPAYMIPTMYIQVPSIPRTASGKTDRKQLREMGTAMASSHAARHWKHQNRPPVTDMEKHVQKLWARVLTLENAGEISLDDSFIRLGGDSIAAMKLVSLAAKAGLGLTVAQIFRHTKLEDQARHVTLLTQGGPAPIAQFSLLPDSPDVKALQADIARAYAIEASSIEDVYPCTPLQEGLLSLSSKPSEYNTYTLQHVFELPPTVDIQQLRSAWEETIRTTDILRTRIVLHPRYGLVQVVVKEEIQWHEPANADVYIETDKQVQMVLGSSLVRYAISPDTGSASRKFIWTIHHALADGWTLDLILRKVKLAYSTLHTVSPVSEFRSFVKYITTRNTDEMVEYWKSTLGGYHSTTFPALPSSVRYAIEDSEVGQKHELPRNITLSAHPLSTLLRAAWAIVQSNYSNTSDVVFGEVFSGRSASVPFIEAIVGPTMATLPVRVKIDDSELAREMLDRLLTTTTQMIPHEQLGLQRISQINTDCQAACSFQTLLVIQPPASTHNGQEEPSLSFSGSPDYRLATYALGIECTPASDGYSFSCRARFDSRVLSAQVAERMMAQLGHVVSQLVAVTASPSSSTLVSDIVLNTPQDLEKLWAWNEAVLELGEEQKHSMLLHQVFRKKALAAPQATAISSWDGECSYAQLEKLSDALAAMLTDLGIGIGLDQQLVPLCFERSMWVVVAMMAVLKTGAGIVPLDPAHPPSRHERILAKVGIGGCILVSPQYAQRQFGEGWTTMVVSEASAAAVPSIHAFDPPTVTHLAVCWILFTSGSTGEPKGIYLEHGAICASYKLLGKTLGIDKETRMLHFSAYAFDIATFEIIGTLMSGGCICIPSDAERLERLPQFCTTFAVNTAILTPSVARLYTPNDIPTLRSLCLAGEAPNKQDISTWQHRIPFLFNCYGPAEAACLAATNRIGPNDADRSATRIGRLRGVPLWITAPGNCRKLAPIGAVGELLIEGSTLARGYLDPTQTDAAFIEDPEWLLQGPAGERSGRRGRLYRTGDLARYDEDGGVVYEGRKDNQVKIRGQRTELGEIEYHLSQCFPTAAEVVVEVATSERDLASVTLVAFVKSRETRDSSEKVPAGIFALPSKLEHEINRRLPLYMIPAVFVSVPEIPKTATDKTDRQKLRELASVYATRAVDAPHHQPQRLPSTVMEETLRDLWLKVIPVRQTAIGLDSNFFRLGGDSIAALKLVGQAQQAGIELSSKDIFLNPKLVDLAACCTDRRCVKEGSRMVAKHATISRFSLLPINASISSIVDEVANACGIPPRLVEDVYPCTPMQEGLMSLSSRNPGTYVSQIAIELAPDVLVDLFKLAWQQTVSTMPILRSRIIQHPKLGFLQAVLKEDVTWNNSTDLDEYLETDSSTPMGFGSELSRHALVWDNSGKHIRFVWTVHHSIYDHVTLRLILDDVYDNYKGNERKDFQPYTSFVRSVISMKSSESEEFWRNACKDEGSSIFPQRSLSIRESCEDTTVEQSYQLCTTATGVTMANVLHAAWAVVSSWHVGNQSIVFGTVLSGRTAPVLGIENIAGPTIATAPFPVIIDPSETISNFLQRIQGQMAAVIPHAQLGLQRISRLSSACELACNFQTLFAVQEGRAMVGNSLGKLLDVNTFSMRTYALTLDCFLDTEGFHVKASFDSRVVDQWRMESILRQFGAVAQQLATKAEGGELVSSIETLNEQGWELLRRWNSHRTHKQWAVFPEDCEKPSPIGAIGELLIEGPDFPSKYLEDPGARKVRSPRWMDRNGHKTVLLTGILVAFDQNGNSIHIGQKRTTISFKGQRIDVSQIERHITSFLAGTEAVVEAIAIPSAENSQSVLAVFLHRPELADRGDNKSRPAICWSKDYGDIEKNLSVVFPDMVPTLYIDMEAMPRTSHGDIDRSQLQTLGSLFPAEKVAILRASRQKRPAVTAMQLAIRGLWASLLGAKEDTFHLDDDFFKSGGDSIGVIKLVGEARKRNIALAAADIFQYPKLESLAVRATENTLSQAEELEEPFSLITSYVDDADRIEDFLSSNILSRIPYAREALQDVLPCTSMQKQLFHAQGQIYRFVLDFGDAQIDAHRLEHAVHGLIDRHAILRTLFVPYQTDLLQVVVSPGKLKGRFVAETLGDGDEIEAAVERVVSADKADTNITGCPMPQFIFLSKRSKTEGFQSKLIIARFSHMQFDGYSVPFVIRDLATLYAATTSNTNTLDADEERTLIVASETLPPAPQFSSYIYAHYSTSSLERRKYWMRLLRASYMTPITVKCDTPERIYNHTRYENRTVELEAWYRIASSGQSSPDDILTMAWALTLSIASEESDIVFGRTVAGRRALFIPHGGADDIMGPCVNTIPVRVQLPSTTEQEEVDKSMTLRDLLAEIHKQTKETLPFESTGLDEIVEHYAPSIWKKKPRRWTSTVVWQDFAGMQAVQHTVHRRSGNHEPNGEEKYEKVGQEDGSVALGYMDPFAASSNVAFADLTCRVTCEIPLFDPADVAVIGRLVDGSPCFALGFAPERVPEPTIKRLADTLMAVVLCLAEHPETSVKHLLRAQRENWRSIRELPNV</sequence>
<comment type="function">
    <text evidence="4 5 6 7 11 13">Nonribosomal peptide synthetase; part of the gene clusters that mediate the biosynthesis of AM-toxins, host-selective toxins (HSTs) causing Alternaria blotch on apple, a worldwide distributed disease (PubMed:10875335, PubMed:11570518, PubMed:17990954). AM-toxins are cyclic depsipeptides containing the 3 residues 2-hydroxy-isovaleric acid (2-HIV), dehydroalanine, L-alanine which are common for all 3 AM-toxins I to III. The fourth precursor is L-alpha-amino-methoxyphenyl-valeric acid (L-Amv) for AM-toxin I, L-alpha-amino-phenyl-valeric acid (L-Apv) for AM-toxin II, and L-alpha-amino-hydroxyphenyl-valeric acid (L-Ahv) for AM-toxin III (Probable). AM-toxins have two target sites for affecting susceptible apple cells; they cause invagination of the plasma membrane and electrolyte loss, and chloroplast disorganization (PubMed:22846083). The non-ribosomal peptide synthetase AMT1 contains 4 catalytic modules and is responsible for activation of each residue in AM-toxin (PubMed:10875335). The aldo-keto reductase AMT2 catalyzes the conversion of 2-keto-isovaleric acid (2-KIV) to 2-hydroxy-isovaleric acid (2-HIV), one of the precursor residues incorporated by AMT1 during AM-toxin biosynthesis, by reduction of its ketone to an alcohol (PubMed:15066029). The cytochrome P450 monooxygenase AMT3 and the thioesterase AMT4 are also important for AM-toxin production, but their exact function within the AM-toxin biosynthesis are not known yet (PubMed:17990954). Up to 21 proteins (including AMT1 to AMT4) are predicted to be involved in AM-toxin biosynthesis since their expression ishighly up-regulated in AM-toxin-producing cultures (PubMed:17990954).</text>
</comment>
<comment type="pathway">
    <text evidence="4">Mycotoxin biosynthesis.</text>
</comment>
<comment type="induction">
    <text evidence="7">Expression is up-regulated more than 10 fold in toxin producing cultures.</text>
</comment>
<comment type="domain">
    <text evidence="1 13">NRP synthetases are composed of discrete domains (adenylation (A), thiolation (T) or peptidyl carrier protein (PCP) and condensation (C) domains) which when grouped together are referred to as a single module. Each module is responsible for the recognition (via the A domain) and incorporation of a single amino acid into the growing peptide product. Thus, an NRP synthetase is generally composed of one or more modules and can terminate in a thioesterase domain (TE) that releases the newly synthesized peptide from the enzyme. Occasionally, epimerase (E) domains (responsible for L- to D-amino acid conversion) are present within the NRP synthetase (By similarity). AMT1 has the following architecture: A-T-C-A-T-C-A-T-C-T-C (Probable).</text>
</comment>
<comment type="disruption phenotype">
    <text evidence="4">Reduces AM-toxin production to undetectable levels.</text>
</comment>
<comment type="miscellaneous">
    <text evidence="5 7">Gene clusters encoding host-selective toxins (HSTs) are localized on conditionally dispensable chromosomes (CDCs), also called supernumerary chromosomes, where they are present in multiple copies (PubMed:11570518, PubMed:17990954). The CDCs are not essential for saprophytic growth but controls host-selective pathogenicity (PubMed:11570518, PubMed:17990954).</text>
</comment>
<comment type="similarity">
    <text evidence="12">Belongs to the NRP synthetase family.</text>
</comment>
<comment type="sequence caution" evidence="12">
    <conflict type="erroneous gene model prediction">
        <sequence resource="EMBL-CDS" id="AAF01762"/>
    </conflict>
</comment>
<protein>
    <recommendedName>
        <fullName evidence="8">AM-toxin synthetase AMT1</fullName>
        <ecNumber evidence="13">6.3.2.-</ecNumber>
    </recommendedName>
    <alternativeName>
        <fullName evidence="8">Cyclic peptide synthetase AMT</fullName>
    </alternativeName>
    <alternativeName>
        <fullName evidence="10">Nonribosomal peptide synthetase AMT1</fullName>
        <shortName evidence="12">NRPS AMT1</shortName>
    </alternativeName>
</protein>
<name>AMT1_ALTAL</name>
<evidence type="ECO:0000250" key="1">
    <source>
        <dbReference type="UniProtKB" id="Q4WAZ9"/>
    </source>
</evidence>
<evidence type="ECO:0000255" key="2"/>
<evidence type="ECO:0000255" key="3">
    <source>
        <dbReference type="PROSITE-ProRule" id="PRU00258"/>
    </source>
</evidence>
<evidence type="ECO:0000269" key="4">
    <source>
    </source>
</evidence>
<evidence type="ECO:0000269" key="5">
    <source>
    </source>
</evidence>
<evidence type="ECO:0000269" key="6">
    <source>
    </source>
</evidence>
<evidence type="ECO:0000269" key="7">
    <source>
    </source>
</evidence>
<evidence type="ECO:0000303" key="8">
    <source>
    </source>
</evidence>
<evidence type="ECO:0000303" key="9">
    <source>
    </source>
</evidence>
<evidence type="ECO:0000303" key="10">
    <source>
    </source>
</evidence>
<evidence type="ECO:0000303" key="11">
    <source>
    </source>
</evidence>
<evidence type="ECO:0000305" key="12"/>
<evidence type="ECO:0000305" key="13">
    <source>
    </source>
</evidence>
<feature type="chain" id="PRO_0000444812" description="AM-toxin synthetase AMT1">
    <location>
        <begin position="1"/>
        <end position="4363"/>
    </location>
</feature>
<feature type="domain" description="Carrier 1" evidence="3">
    <location>
        <begin position="810"/>
        <end position="887"/>
    </location>
</feature>
<feature type="domain" description="Carrier 2" evidence="3">
    <location>
        <begin position="1884"/>
        <end position="1961"/>
    </location>
</feature>
<feature type="domain" description="Carrier 3" evidence="3">
    <location>
        <begin position="2977"/>
        <end position="3053"/>
    </location>
</feature>
<feature type="domain" description="Carrier 4" evidence="3">
    <location>
        <begin position="3730"/>
        <end position="3806"/>
    </location>
</feature>
<feature type="region of interest" description="Adenylation 1" evidence="2">
    <location>
        <begin position="278"/>
        <end position="670"/>
    </location>
</feature>
<feature type="region of interest" description="Condensation 1" evidence="2">
    <location>
        <begin position="926"/>
        <end position="1340"/>
    </location>
</feature>
<feature type="region of interest" description="Adenylation 2" evidence="2">
    <location>
        <begin position="1368"/>
        <end position="1765"/>
    </location>
</feature>
<feature type="region of interest" description="Condensation 2" evidence="2">
    <location>
        <begin position="1999"/>
        <end position="2410"/>
    </location>
</feature>
<feature type="region of interest" description="Adenylation 3" evidence="2">
    <location>
        <begin position="2448"/>
        <end position="2853"/>
    </location>
</feature>
<feature type="region of interest" description="Condensation 3" evidence="2">
    <location>
        <begin position="3098"/>
        <end position="3503"/>
    </location>
</feature>
<feature type="region of interest" description="Condensation 4" evidence="2">
    <location>
        <begin position="3850"/>
        <end position="4204"/>
    </location>
</feature>
<feature type="modified residue" description="O-(pantetheine 4'-phosphoryl)serine" evidence="3">
    <location>
        <position position="847"/>
    </location>
</feature>
<feature type="modified residue" description="O-(pantetheine 4'-phosphoryl)serine" evidence="3">
    <location>
        <position position="1922"/>
    </location>
</feature>
<feature type="modified residue" description="O-(pantetheine 4'-phosphoryl)serine" evidence="3">
    <location>
        <position position="3014"/>
    </location>
</feature>
<feature type="modified residue" description="O-(pantetheine 4'-phosphoryl)serine" evidence="3">
    <location>
        <position position="3767"/>
    </location>
</feature>
<feature type="sequence conflict" description="In Ref. 4; BAI44801." evidence="12" ref="4">
    <original>L</original>
    <variation>I</variation>
    <location>
        <position position="2986"/>
    </location>
</feature>
<reference key="1">
    <citation type="journal article" date="2000" name="Mol. Plant Microbe Interact.">
        <title>Cloning and characterization of a cyclic peptide synthetase gene from Alternaria alternata apple pathotype whose product is involved in AM-toxin synthesis and pathogenicity.</title>
        <authorList>
            <person name="Johnson R.D."/>
            <person name="Johnson L."/>
            <person name="Itoh Y."/>
            <person name="Kodama M."/>
            <person name="Otani H."/>
            <person name="Kohmoto K."/>
        </authorList>
    </citation>
    <scope>NUCLEOTIDE SEQUENCE [GENOMIC DNA]</scope>
    <scope>FUNCTION</scope>
    <scope>DISRUPTION PHENOTYPE</scope>
    <scope>PATHWAY</scope>
    <source>
        <strain>M-71</strain>
    </source>
</reference>
<reference key="2">
    <citation type="journal article" date="2004" name="Mol. Microbiol.">
        <title>Dissection of the host range of the fungal plant pathogen Alternaria alternata by modification of secondary metabolism.</title>
        <authorList>
            <person name="Ito K."/>
            <person name="Tanaka T."/>
            <person name="Hatta R."/>
            <person name="Yamamoto M."/>
            <person name="Akimitsu K."/>
            <person name="Tsuge T."/>
        </authorList>
    </citation>
    <scope>NUCLEOTIDE SEQUENCE [GENOMIC DNA]</scope>
    <scope>FUNCTION</scope>
    <source>
        <strain>NBRC 8984</strain>
    </source>
</reference>
<reference key="3">
    <citation type="journal article" date="2007" name="Mol. Plant Microbe Interact.">
        <title>Expression profiles of genes encoded by the supernumerary chromosome controlling AM-toxin biosynthesis and pathogenicity in the apple pathotype of Alternaria alternata.</title>
        <authorList>
            <person name="Harimoto Y."/>
            <person name="Hatta R."/>
            <person name="Kodama M."/>
            <person name="Yamamoto M."/>
            <person name="Otani H."/>
            <person name="Tsuge T."/>
        </authorList>
    </citation>
    <scope>NUCLEOTIDE SEQUENCE [GENOMIC DNA]</scope>
    <scope>FUNCTION</scope>
    <scope>INDUCTION</scope>
    <source>
        <strain>NBRC 8984</strain>
    </source>
</reference>
<reference key="4">
    <citation type="submission" date="2009-10" db="EMBL/GenBank/DDBJ databases">
        <title>A Zn(II)2Cys6 transcription regulator encoded by the AMT gene cluster negatively controls AM-toxin production in the apple pathotype of Alternaria alternata.</title>
        <authorList>
            <person name="Harimoto Y."/>
            <person name="Kodama M."/>
            <person name="Yamamoto M."/>
            <person name="Otani H."/>
            <person name="Tsuge T."/>
        </authorList>
    </citation>
    <scope>NUCLEOTIDE SEQUENCE [GENOMIC DNA] OF 1-4175</scope>
    <source>
        <strain>NBRC 8984</strain>
    </source>
</reference>
<reference key="5">
    <citation type="journal article" date="2001" name="Curr. Genet.">
        <title>Spontaneous loss of a conditionally dispensable chromosome from the Alternaria alternata apple pathotype leads to loss of toxin production and pathogenicity.</title>
        <authorList>
            <person name="Johnson L.J."/>
            <person name="Johnson R.D."/>
            <person name="Akamatsu H."/>
            <person name="Salamiah A."/>
            <person name="Otani H."/>
            <person name="Kohmoto K."/>
            <person name="Kodama M."/>
        </authorList>
    </citation>
    <scope>FUNCTION</scope>
</reference>
<reference key="6">
    <citation type="journal article" date="2013" name="FEMS Microbiol. Rev.">
        <title>Host-selective toxins produced by the plant pathogenic fungus Alternaria alternata.</title>
        <authorList>
            <person name="Tsuge T."/>
            <person name="Harimoto Y."/>
            <person name="Akimitsu K."/>
            <person name="Ohtani K."/>
            <person name="Kodama M."/>
            <person name="Akagi Y."/>
            <person name="Egusa M."/>
            <person name="Yamamoto M."/>
            <person name="Otani H."/>
        </authorList>
    </citation>
    <scope>REVIEW ON HOST-SELECTIVE TOXINS</scope>
</reference>
<dbReference type="EC" id="6.3.2.-" evidence="13"/>
<dbReference type="EMBL" id="AF184074">
    <property type="protein sequence ID" value="AAF01762.1"/>
    <property type="status" value="ALT_SEQ"/>
    <property type="molecule type" value="Genomic_DNA"/>
</dbReference>
<dbReference type="EMBL" id="AB525198">
    <property type="protein sequence ID" value="BAI44739.1"/>
    <property type="molecule type" value="Genomic_DNA"/>
</dbReference>
<dbReference type="EMBL" id="AB525200">
    <property type="protein sequence ID" value="BAI44801.1"/>
    <property type="molecule type" value="Genomic_DNA"/>
</dbReference>
<dbReference type="EMBL" id="AB525199">
    <property type="protein sequence ID" value="BAI44759.1"/>
    <property type="molecule type" value="Genomic_DNA"/>
</dbReference>
<dbReference type="SMR" id="C9K7B5"/>
<dbReference type="VEuPathDB" id="FungiDB:CC77DRAFT_1020466"/>
<dbReference type="VEuPathDB" id="FungiDB:CC77DRAFT_1061171"/>
<dbReference type="VEuPathDB" id="FungiDB:CC77DRAFT_1064818"/>
<dbReference type="VEuPathDB" id="FungiDB:CC77DRAFT_977730"/>
<dbReference type="PHI-base" id="PHI:160"/>
<dbReference type="GO" id="GO:0005737">
    <property type="term" value="C:cytoplasm"/>
    <property type="evidence" value="ECO:0007669"/>
    <property type="project" value="TreeGrafter"/>
</dbReference>
<dbReference type="GO" id="GO:0016853">
    <property type="term" value="F:isomerase activity"/>
    <property type="evidence" value="ECO:0007669"/>
    <property type="project" value="UniProtKB-KW"/>
</dbReference>
<dbReference type="GO" id="GO:0016874">
    <property type="term" value="F:ligase activity"/>
    <property type="evidence" value="ECO:0007669"/>
    <property type="project" value="UniProtKB-KW"/>
</dbReference>
<dbReference type="GO" id="GO:0031177">
    <property type="term" value="F:phosphopantetheine binding"/>
    <property type="evidence" value="ECO:0007669"/>
    <property type="project" value="InterPro"/>
</dbReference>
<dbReference type="GO" id="GO:0043041">
    <property type="term" value="P:amino acid activation for nonribosomal peptide biosynthetic process"/>
    <property type="evidence" value="ECO:0007669"/>
    <property type="project" value="TreeGrafter"/>
</dbReference>
<dbReference type="GO" id="GO:0044550">
    <property type="term" value="P:secondary metabolite biosynthetic process"/>
    <property type="evidence" value="ECO:0007669"/>
    <property type="project" value="TreeGrafter"/>
</dbReference>
<dbReference type="CDD" id="cd05918">
    <property type="entry name" value="A_NRPS_SidN3_like"/>
    <property type="match status" value="3"/>
</dbReference>
<dbReference type="CDD" id="cd19545">
    <property type="entry name" value="FUM14_C_NRPS-like"/>
    <property type="match status" value="3"/>
</dbReference>
<dbReference type="FunFam" id="3.30.300.30:FF:000015">
    <property type="entry name" value="Nonribosomal peptide synthase SidD"/>
    <property type="match status" value="3"/>
</dbReference>
<dbReference type="FunFam" id="3.30.559.30:FF:000003">
    <property type="entry name" value="Nonribosomal peptide synthase SidD"/>
    <property type="match status" value="3"/>
</dbReference>
<dbReference type="FunFam" id="1.10.1200.10:FF:000005">
    <property type="entry name" value="Nonribosomal peptide synthetase 1"/>
    <property type="match status" value="2"/>
</dbReference>
<dbReference type="Gene3D" id="3.30.300.30">
    <property type="match status" value="4"/>
</dbReference>
<dbReference type="Gene3D" id="1.10.1200.10">
    <property type="entry name" value="ACP-like"/>
    <property type="match status" value="4"/>
</dbReference>
<dbReference type="Gene3D" id="3.30.559.10">
    <property type="entry name" value="Chloramphenicol acetyltransferase-like domain"/>
    <property type="match status" value="4"/>
</dbReference>
<dbReference type="Gene3D" id="3.40.50.12780">
    <property type="entry name" value="N-terminal domain of ligase-like"/>
    <property type="match status" value="3"/>
</dbReference>
<dbReference type="Gene3D" id="3.30.559.30">
    <property type="entry name" value="Nonribosomal peptide synthetase, condensation domain"/>
    <property type="match status" value="5"/>
</dbReference>
<dbReference type="InterPro" id="IPR010071">
    <property type="entry name" value="AA_adenyl_dom"/>
</dbReference>
<dbReference type="InterPro" id="IPR036736">
    <property type="entry name" value="ACP-like_sf"/>
</dbReference>
<dbReference type="InterPro" id="IPR025110">
    <property type="entry name" value="AMP-bd_C"/>
</dbReference>
<dbReference type="InterPro" id="IPR045851">
    <property type="entry name" value="AMP-bd_C_sf"/>
</dbReference>
<dbReference type="InterPro" id="IPR020845">
    <property type="entry name" value="AMP-binding_CS"/>
</dbReference>
<dbReference type="InterPro" id="IPR000873">
    <property type="entry name" value="AMP-dep_synth/lig_dom"/>
</dbReference>
<dbReference type="InterPro" id="IPR042099">
    <property type="entry name" value="ANL_N_sf"/>
</dbReference>
<dbReference type="InterPro" id="IPR023213">
    <property type="entry name" value="CAT-like_dom_sf"/>
</dbReference>
<dbReference type="InterPro" id="IPR001242">
    <property type="entry name" value="Condensatn"/>
</dbReference>
<dbReference type="InterPro" id="IPR020806">
    <property type="entry name" value="PKS_PP-bd"/>
</dbReference>
<dbReference type="InterPro" id="IPR009081">
    <property type="entry name" value="PP-bd_ACP"/>
</dbReference>
<dbReference type="InterPro" id="IPR006162">
    <property type="entry name" value="Ppantetheine_attach_site"/>
</dbReference>
<dbReference type="NCBIfam" id="TIGR01733">
    <property type="entry name" value="AA-adenyl-dom"/>
    <property type="match status" value="3"/>
</dbReference>
<dbReference type="NCBIfam" id="NF003417">
    <property type="entry name" value="PRK04813.1"/>
    <property type="match status" value="4"/>
</dbReference>
<dbReference type="PANTHER" id="PTHR45527:SF16">
    <property type="entry name" value="NONRIBOSOMAL PEPTIDE SYNTHASE ATNA-RELATED"/>
    <property type="match status" value="1"/>
</dbReference>
<dbReference type="PANTHER" id="PTHR45527">
    <property type="entry name" value="NONRIBOSOMAL PEPTIDE SYNTHETASE"/>
    <property type="match status" value="1"/>
</dbReference>
<dbReference type="Pfam" id="PF00501">
    <property type="entry name" value="AMP-binding"/>
    <property type="match status" value="3"/>
</dbReference>
<dbReference type="Pfam" id="PF13193">
    <property type="entry name" value="AMP-binding_C"/>
    <property type="match status" value="1"/>
</dbReference>
<dbReference type="Pfam" id="PF00668">
    <property type="entry name" value="Condensation"/>
    <property type="match status" value="4"/>
</dbReference>
<dbReference type="Pfam" id="PF00550">
    <property type="entry name" value="PP-binding"/>
    <property type="match status" value="4"/>
</dbReference>
<dbReference type="SMART" id="SM00823">
    <property type="entry name" value="PKS_PP"/>
    <property type="match status" value="4"/>
</dbReference>
<dbReference type="SMART" id="SM01294">
    <property type="entry name" value="PKS_PP_betabranch"/>
    <property type="match status" value="1"/>
</dbReference>
<dbReference type="SUPFAM" id="SSF56801">
    <property type="entry name" value="Acetyl-CoA synthetase-like"/>
    <property type="match status" value="4"/>
</dbReference>
<dbReference type="SUPFAM" id="SSF47336">
    <property type="entry name" value="ACP-like"/>
    <property type="match status" value="4"/>
</dbReference>
<dbReference type="SUPFAM" id="SSF52777">
    <property type="entry name" value="CoA-dependent acyltransferases"/>
    <property type="match status" value="9"/>
</dbReference>
<dbReference type="PROSITE" id="PS00455">
    <property type="entry name" value="AMP_BINDING"/>
    <property type="match status" value="3"/>
</dbReference>
<dbReference type="PROSITE" id="PS50075">
    <property type="entry name" value="CARRIER"/>
    <property type="match status" value="4"/>
</dbReference>
<dbReference type="PROSITE" id="PS00012">
    <property type="entry name" value="PHOSPHOPANTETHEINE"/>
    <property type="match status" value="4"/>
</dbReference>
<keyword id="KW-0413">Isomerase</keyword>
<keyword id="KW-0436">Ligase</keyword>
<keyword id="KW-0596">Phosphopantetheine</keyword>
<keyword id="KW-0597">Phosphoprotein</keyword>
<keyword id="KW-0677">Repeat</keyword>
<keyword id="KW-0843">Virulence</keyword>
<gene>
    <name evidence="9" type="primary">AMT1</name>
    <name evidence="8" type="synonym">AMT</name>
</gene>
<accession>C9K7B5</accession>
<accession>C9K7D5</accession>
<accession>C9K7H7</accession>
<accession>Q9UVN5</accession>
<organism>
    <name type="scientific">Alternaria alternata</name>
    <name type="common">Alternaria rot fungus</name>
    <name type="synonym">Torula alternata</name>
    <dbReference type="NCBI Taxonomy" id="5599"/>
    <lineage>
        <taxon>Eukaryota</taxon>
        <taxon>Fungi</taxon>
        <taxon>Dikarya</taxon>
        <taxon>Ascomycota</taxon>
        <taxon>Pezizomycotina</taxon>
        <taxon>Dothideomycetes</taxon>
        <taxon>Pleosporomycetidae</taxon>
        <taxon>Pleosporales</taxon>
        <taxon>Pleosporineae</taxon>
        <taxon>Pleosporaceae</taxon>
        <taxon>Alternaria</taxon>
        <taxon>Alternaria sect. Alternaria</taxon>
        <taxon>Alternaria alternata complex</taxon>
    </lineage>
</organism>